<protein>
    <recommendedName>
        <fullName>Metal transporter CNNM4</fullName>
    </recommendedName>
    <alternativeName>
        <fullName>Ancient conserved domain-containing protein 4</fullName>
    </alternativeName>
    <alternativeName>
        <fullName>Cyclin-M4</fullName>
    </alternativeName>
</protein>
<name>CNNM4_RAT</name>
<proteinExistence type="evidence at protein level"/>
<comment type="function">
    <text evidence="7 8">Probable metal transporter. The interaction with the metal ion chaperone COX11 suggests that it may play a role in sensory neuron functions. May play a role in biomineralization and retinal function.</text>
</comment>
<comment type="subunit">
    <text evidence="1">Interacts with COX11.</text>
</comment>
<comment type="subcellular location">
    <subcellularLocation>
        <location evidence="10">Cell membrane</location>
        <topology evidence="10">Multi-pass membrane protein</topology>
    </subcellularLocation>
</comment>
<comment type="tissue specificity">
    <text evidence="7 8">Present in spinal cord dorsal horn neurons and in developing teeth (at protein level). In the tooth, higher expression is found in the ameloblasts during the transition and maturation phases of amelogenesis; reduced expression in the odontoblasts.</text>
</comment>
<comment type="miscellaneous">
    <text>Shares weak sequence similarity with the cyclin family, hence its name. However, it has no cyclin-like function in vivo.</text>
</comment>
<comment type="similarity">
    <text evidence="9">Belongs to the ACDP family.</text>
</comment>
<dbReference type="EMBL" id="AABR03067911">
    <property type="status" value="NOT_ANNOTATED_CDS"/>
    <property type="molecule type" value="Genomic_DNA"/>
</dbReference>
<dbReference type="EMBL" id="AABR03068531">
    <property type="status" value="NOT_ANNOTATED_CDS"/>
    <property type="molecule type" value="Genomic_DNA"/>
</dbReference>
<dbReference type="RefSeq" id="NP_001257979.1">
    <property type="nucleotide sequence ID" value="NM_001271050.1"/>
</dbReference>
<dbReference type="SMR" id="P0C588"/>
<dbReference type="FunCoup" id="P0C588">
    <property type="interactions" value="374"/>
</dbReference>
<dbReference type="STRING" id="10116.ENSRNOP00000021434"/>
<dbReference type="GlyCosmos" id="P0C588">
    <property type="glycosylation" value="1 site, No reported glycans"/>
</dbReference>
<dbReference type="GlyGen" id="P0C588">
    <property type="glycosylation" value="1 site"/>
</dbReference>
<dbReference type="iPTMnet" id="P0C588"/>
<dbReference type="PhosphoSitePlus" id="P0C588"/>
<dbReference type="PaxDb" id="10116-ENSRNOP00000021434"/>
<dbReference type="Ensembl" id="ENSRNOT00000021434.8">
    <property type="protein sequence ID" value="ENSRNOP00000021434.4"/>
    <property type="gene ID" value="ENSRNOG00000015886.8"/>
</dbReference>
<dbReference type="GeneID" id="363216"/>
<dbReference type="KEGG" id="rno:363216"/>
<dbReference type="UCSC" id="RGD:1305571">
    <property type="organism name" value="rat"/>
</dbReference>
<dbReference type="AGR" id="RGD:1305571"/>
<dbReference type="CTD" id="26504"/>
<dbReference type="RGD" id="1305571">
    <property type="gene designation" value="Cnnm4"/>
</dbReference>
<dbReference type="eggNOG" id="KOG2118">
    <property type="taxonomic scope" value="Eukaryota"/>
</dbReference>
<dbReference type="GeneTree" id="ENSGT00940000156317"/>
<dbReference type="InParanoid" id="P0C588"/>
<dbReference type="OrthoDB" id="5353557at2759"/>
<dbReference type="PhylomeDB" id="P0C588"/>
<dbReference type="TreeFam" id="TF101012"/>
<dbReference type="PRO" id="PR:P0C588"/>
<dbReference type="Proteomes" id="UP000002494">
    <property type="component" value="Chromosome 9"/>
</dbReference>
<dbReference type="Bgee" id="ENSRNOG00000015886">
    <property type="expression patterns" value="Expressed in jejunum and 19 other cell types or tissues"/>
</dbReference>
<dbReference type="ExpressionAtlas" id="P0C588">
    <property type="expression patterns" value="baseline and differential"/>
</dbReference>
<dbReference type="GO" id="GO:0016323">
    <property type="term" value="C:basolateral plasma membrane"/>
    <property type="evidence" value="ECO:0000266"/>
    <property type="project" value="RGD"/>
</dbReference>
<dbReference type="GO" id="GO:0030425">
    <property type="term" value="C:dendrite"/>
    <property type="evidence" value="ECO:0000314"/>
    <property type="project" value="UniProtKB"/>
</dbReference>
<dbReference type="GO" id="GO:0043025">
    <property type="term" value="C:neuronal cell body"/>
    <property type="evidence" value="ECO:0000314"/>
    <property type="project" value="UniProtKB"/>
</dbReference>
<dbReference type="GO" id="GO:0005886">
    <property type="term" value="C:plasma membrane"/>
    <property type="evidence" value="ECO:0000318"/>
    <property type="project" value="GO_Central"/>
</dbReference>
<dbReference type="GO" id="GO:0032991">
    <property type="term" value="C:protein-containing complex"/>
    <property type="evidence" value="ECO:0000266"/>
    <property type="project" value="RGD"/>
</dbReference>
<dbReference type="GO" id="GO:0015095">
    <property type="term" value="F:magnesium ion transmembrane transporter activity"/>
    <property type="evidence" value="ECO:0000266"/>
    <property type="project" value="RGD"/>
</dbReference>
<dbReference type="GO" id="GO:0015081">
    <property type="term" value="F:sodium ion transmembrane transporter activity"/>
    <property type="evidence" value="ECO:0000266"/>
    <property type="project" value="RGD"/>
</dbReference>
<dbReference type="GO" id="GO:0070166">
    <property type="term" value="P:enamel mineralization"/>
    <property type="evidence" value="ECO:0000266"/>
    <property type="project" value="RGD"/>
</dbReference>
<dbReference type="GO" id="GO:0030003">
    <property type="term" value="P:intracellular monoatomic cation homeostasis"/>
    <property type="evidence" value="ECO:0000266"/>
    <property type="project" value="RGD"/>
</dbReference>
<dbReference type="GO" id="GO:0010960">
    <property type="term" value="P:magnesium ion homeostasis"/>
    <property type="evidence" value="ECO:0000266"/>
    <property type="project" value="RGD"/>
</dbReference>
<dbReference type="GO" id="GO:0015693">
    <property type="term" value="P:magnesium ion transport"/>
    <property type="evidence" value="ECO:0000266"/>
    <property type="project" value="RGD"/>
</dbReference>
<dbReference type="GO" id="GO:0007601">
    <property type="term" value="P:visual perception"/>
    <property type="evidence" value="ECO:0007669"/>
    <property type="project" value="UniProtKB-KW"/>
</dbReference>
<dbReference type="CDD" id="cd04590">
    <property type="entry name" value="CBS_pair_CorC_HlyC_assoc"/>
    <property type="match status" value="1"/>
</dbReference>
<dbReference type="FunFam" id="3.10.580.10:FF:000001">
    <property type="entry name" value="Putative metal transporter CNNM3 isoform 2"/>
    <property type="match status" value="1"/>
</dbReference>
<dbReference type="Gene3D" id="3.10.580.10">
    <property type="entry name" value="CBS-domain"/>
    <property type="match status" value="1"/>
</dbReference>
<dbReference type="Gene3D" id="2.60.120.10">
    <property type="entry name" value="Jelly Rolls"/>
    <property type="match status" value="1"/>
</dbReference>
<dbReference type="InterPro" id="IPR045095">
    <property type="entry name" value="ACDP"/>
</dbReference>
<dbReference type="InterPro" id="IPR000644">
    <property type="entry name" value="CBS_dom"/>
</dbReference>
<dbReference type="InterPro" id="IPR046342">
    <property type="entry name" value="CBS_dom_sf"/>
</dbReference>
<dbReference type="InterPro" id="IPR018490">
    <property type="entry name" value="cNMP-bd_dom_sf"/>
</dbReference>
<dbReference type="InterPro" id="IPR002550">
    <property type="entry name" value="CNNM"/>
</dbReference>
<dbReference type="InterPro" id="IPR044751">
    <property type="entry name" value="Ion_transp-like_CBS"/>
</dbReference>
<dbReference type="InterPro" id="IPR014710">
    <property type="entry name" value="RmlC-like_jellyroll"/>
</dbReference>
<dbReference type="PANTHER" id="PTHR12064">
    <property type="entry name" value="METAL TRANSPORTER CNNM"/>
    <property type="match status" value="1"/>
</dbReference>
<dbReference type="PANTHER" id="PTHR12064:SF26">
    <property type="entry name" value="METAL TRANSPORTER CNNM4"/>
    <property type="match status" value="1"/>
</dbReference>
<dbReference type="Pfam" id="PF00571">
    <property type="entry name" value="CBS"/>
    <property type="match status" value="1"/>
</dbReference>
<dbReference type="Pfam" id="PF01595">
    <property type="entry name" value="CNNM"/>
    <property type="match status" value="1"/>
</dbReference>
<dbReference type="Pfam" id="PF25511">
    <property type="entry name" value="Ig_CNNM4_N"/>
    <property type="match status" value="1"/>
</dbReference>
<dbReference type="SUPFAM" id="SSF51206">
    <property type="entry name" value="cAMP-binding domain-like"/>
    <property type="match status" value="1"/>
</dbReference>
<dbReference type="SUPFAM" id="SSF54631">
    <property type="entry name" value="CBS-domain pair"/>
    <property type="match status" value="1"/>
</dbReference>
<dbReference type="PROSITE" id="PS51371">
    <property type="entry name" value="CBS"/>
    <property type="match status" value="2"/>
</dbReference>
<dbReference type="PROSITE" id="PS51846">
    <property type="entry name" value="CNNM"/>
    <property type="match status" value="1"/>
</dbReference>
<reference key="1">
    <citation type="journal article" date="2004" name="Nature">
        <title>Genome sequence of the Brown Norway rat yields insights into mammalian evolution.</title>
        <authorList>
            <person name="Gibbs R.A."/>
            <person name="Weinstock G.M."/>
            <person name="Metzker M.L."/>
            <person name="Muzny D.M."/>
            <person name="Sodergren E.J."/>
            <person name="Scherer S."/>
            <person name="Scott G."/>
            <person name="Steffen D."/>
            <person name="Worley K.C."/>
            <person name="Burch P.E."/>
            <person name="Okwuonu G."/>
            <person name="Hines S."/>
            <person name="Lewis L."/>
            <person name="Deramo C."/>
            <person name="Delgado O."/>
            <person name="Dugan-Rocha S."/>
            <person name="Miner G."/>
            <person name="Morgan M."/>
            <person name="Hawes A."/>
            <person name="Gill R."/>
            <person name="Holt R.A."/>
            <person name="Adams M.D."/>
            <person name="Amanatides P.G."/>
            <person name="Baden-Tillson H."/>
            <person name="Barnstead M."/>
            <person name="Chin S."/>
            <person name="Evans C.A."/>
            <person name="Ferriera S."/>
            <person name="Fosler C."/>
            <person name="Glodek A."/>
            <person name="Gu Z."/>
            <person name="Jennings D."/>
            <person name="Kraft C.L."/>
            <person name="Nguyen T."/>
            <person name="Pfannkoch C.M."/>
            <person name="Sitter C."/>
            <person name="Sutton G.G."/>
            <person name="Venter J.C."/>
            <person name="Woodage T."/>
            <person name="Smith D."/>
            <person name="Lee H.-M."/>
            <person name="Gustafson E."/>
            <person name="Cahill P."/>
            <person name="Kana A."/>
            <person name="Doucette-Stamm L."/>
            <person name="Weinstock K."/>
            <person name="Fechtel K."/>
            <person name="Weiss R.B."/>
            <person name="Dunn D.M."/>
            <person name="Green E.D."/>
            <person name="Blakesley R.W."/>
            <person name="Bouffard G.G."/>
            <person name="De Jong P.J."/>
            <person name="Osoegawa K."/>
            <person name="Zhu B."/>
            <person name="Marra M."/>
            <person name="Schein J."/>
            <person name="Bosdet I."/>
            <person name="Fjell C."/>
            <person name="Jones S."/>
            <person name="Krzywinski M."/>
            <person name="Mathewson C."/>
            <person name="Siddiqui A."/>
            <person name="Wye N."/>
            <person name="McPherson J."/>
            <person name="Zhao S."/>
            <person name="Fraser C.M."/>
            <person name="Shetty J."/>
            <person name="Shatsman S."/>
            <person name="Geer K."/>
            <person name="Chen Y."/>
            <person name="Abramzon S."/>
            <person name="Nierman W.C."/>
            <person name="Havlak P.H."/>
            <person name="Chen R."/>
            <person name="Durbin K.J."/>
            <person name="Egan A."/>
            <person name="Ren Y."/>
            <person name="Song X.-Z."/>
            <person name="Li B."/>
            <person name="Liu Y."/>
            <person name="Qin X."/>
            <person name="Cawley S."/>
            <person name="Cooney A.J."/>
            <person name="D'Souza L.M."/>
            <person name="Martin K."/>
            <person name="Wu J.Q."/>
            <person name="Gonzalez-Garay M.L."/>
            <person name="Jackson A.R."/>
            <person name="Kalafus K.J."/>
            <person name="McLeod M.P."/>
            <person name="Milosavljevic A."/>
            <person name="Virk D."/>
            <person name="Volkov A."/>
            <person name="Wheeler D.A."/>
            <person name="Zhang Z."/>
            <person name="Bailey J.A."/>
            <person name="Eichler E.E."/>
            <person name="Tuzun E."/>
            <person name="Birney E."/>
            <person name="Mongin E."/>
            <person name="Ureta-Vidal A."/>
            <person name="Woodwark C."/>
            <person name="Zdobnov E."/>
            <person name="Bork P."/>
            <person name="Suyama M."/>
            <person name="Torrents D."/>
            <person name="Alexandersson M."/>
            <person name="Trask B.J."/>
            <person name="Young J.M."/>
            <person name="Huang H."/>
            <person name="Wang H."/>
            <person name="Xing H."/>
            <person name="Daniels S."/>
            <person name="Gietzen D."/>
            <person name="Schmidt J."/>
            <person name="Stevens K."/>
            <person name="Vitt U."/>
            <person name="Wingrove J."/>
            <person name="Camara F."/>
            <person name="Mar Alba M."/>
            <person name="Abril J.F."/>
            <person name="Guigo R."/>
            <person name="Smit A."/>
            <person name="Dubchak I."/>
            <person name="Rubin E.M."/>
            <person name="Couronne O."/>
            <person name="Poliakov A."/>
            <person name="Huebner N."/>
            <person name="Ganten D."/>
            <person name="Goesele C."/>
            <person name="Hummel O."/>
            <person name="Kreitler T."/>
            <person name="Lee Y.-A."/>
            <person name="Monti J."/>
            <person name="Schulz H."/>
            <person name="Zimdahl H."/>
            <person name="Himmelbauer H."/>
            <person name="Lehrach H."/>
            <person name="Jacob H.J."/>
            <person name="Bromberg S."/>
            <person name="Gullings-Handley J."/>
            <person name="Jensen-Seaman M.I."/>
            <person name="Kwitek A.E."/>
            <person name="Lazar J."/>
            <person name="Pasko D."/>
            <person name="Tonellato P.J."/>
            <person name="Twigger S."/>
            <person name="Ponting C.P."/>
            <person name="Duarte J.M."/>
            <person name="Rice S."/>
            <person name="Goodstadt L."/>
            <person name="Beatson S.A."/>
            <person name="Emes R.D."/>
            <person name="Winter E.E."/>
            <person name="Webber C."/>
            <person name="Brandt P."/>
            <person name="Nyakatura G."/>
            <person name="Adetobi M."/>
            <person name="Chiaromonte F."/>
            <person name="Elnitski L."/>
            <person name="Eswara P."/>
            <person name="Hardison R.C."/>
            <person name="Hou M."/>
            <person name="Kolbe D."/>
            <person name="Makova K."/>
            <person name="Miller W."/>
            <person name="Nekrutenko A."/>
            <person name="Riemer C."/>
            <person name="Schwartz S."/>
            <person name="Taylor J."/>
            <person name="Yang S."/>
            <person name="Zhang Y."/>
            <person name="Lindpaintner K."/>
            <person name="Andrews T.D."/>
            <person name="Caccamo M."/>
            <person name="Clamp M."/>
            <person name="Clarke L."/>
            <person name="Curwen V."/>
            <person name="Durbin R.M."/>
            <person name="Eyras E."/>
            <person name="Searle S.M."/>
            <person name="Cooper G.M."/>
            <person name="Batzoglou S."/>
            <person name="Brudno M."/>
            <person name="Sidow A."/>
            <person name="Stone E.A."/>
            <person name="Payseur B.A."/>
            <person name="Bourque G."/>
            <person name="Lopez-Otin C."/>
            <person name="Puente X.S."/>
            <person name="Chakrabarti K."/>
            <person name="Chatterji S."/>
            <person name="Dewey C."/>
            <person name="Pachter L."/>
            <person name="Bray N."/>
            <person name="Yap V.B."/>
            <person name="Caspi A."/>
            <person name="Tesler G."/>
            <person name="Pevzner P.A."/>
            <person name="Haussler D."/>
            <person name="Roskin K.M."/>
            <person name="Baertsch R."/>
            <person name="Clawson H."/>
            <person name="Furey T.S."/>
            <person name="Hinrichs A.S."/>
            <person name="Karolchik D."/>
            <person name="Kent W.J."/>
            <person name="Rosenbloom K.R."/>
            <person name="Trumbower H."/>
            <person name="Weirauch M."/>
            <person name="Cooper D.N."/>
            <person name="Stenson P.D."/>
            <person name="Ma B."/>
            <person name="Brent M."/>
            <person name="Arumugam M."/>
            <person name="Shteynberg D."/>
            <person name="Copley R.R."/>
            <person name="Taylor M.S."/>
            <person name="Riethman H."/>
            <person name="Mudunuri U."/>
            <person name="Peterson J."/>
            <person name="Guyer M."/>
            <person name="Felsenfeld A."/>
            <person name="Old S."/>
            <person name="Mockrin S."/>
            <person name="Collins F.S."/>
        </authorList>
    </citation>
    <scope>NUCLEOTIDE SEQUENCE [LARGE SCALE GENOMIC DNA]</scope>
    <source>
        <strain>Brown Norway</strain>
    </source>
</reference>
<reference key="2">
    <citation type="journal article" date="2005" name="Mol. Pain">
        <title>Physical interaction and functional coupling between ACDP4 and the intracellular ion chaperone COX11, an implication of the role of ACDP4 in essential metal ion transport and homeostasis.</title>
        <authorList>
            <person name="Guo D."/>
            <person name="Ling J."/>
            <person name="Wang M.-H."/>
            <person name="She J.-X."/>
            <person name="Gu J."/>
            <person name="Wang C.-Y."/>
        </authorList>
    </citation>
    <scope>FUNCTION</scope>
    <scope>SUBCELLULAR LOCATION</scope>
    <scope>TISSUE SPECIFICITY</scope>
</reference>
<reference key="3">
    <citation type="journal article" date="2009" name="Am. J. Hum. Genet.">
        <title>Mutations in CNNM4 cause Jalili syndrome, consisting of autosomal-recessive cone-rod dystrophy and amelogenesis imperfecta.</title>
        <authorList>
            <person name="Parry D.A."/>
            <person name="Mighell A.J."/>
            <person name="El-Sayed W."/>
            <person name="Shore R.C."/>
            <person name="Jalili I.K."/>
            <person name="Dollfus H."/>
            <person name="Bloch-Zupan A."/>
            <person name="Carlos R."/>
            <person name="Carr I.M."/>
            <person name="Downey L.M."/>
            <person name="Blain K.M."/>
            <person name="Mansfield D.C."/>
            <person name="Shahrabi M."/>
            <person name="Heidari M."/>
            <person name="Aref P."/>
            <person name="Abbasi M."/>
            <person name="Michaelides M."/>
            <person name="Moore A.T."/>
            <person name="Kirkham J."/>
            <person name="Inglehearn C.F."/>
        </authorList>
    </citation>
    <scope>TISSUE SPECIFICITY</scope>
    <scope>FUNCTION</scope>
</reference>
<reference key="4">
    <citation type="journal article" date="2012" name="Nat. Commun.">
        <title>Quantitative maps of protein phosphorylation sites across 14 different rat organs and tissues.</title>
        <authorList>
            <person name="Lundby A."/>
            <person name="Secher A."/>
            <person name="Lage K."/>
            <person name="Nordsborg N.B."/>
            <person name="Dmytriyev A."/>
            <person name="Lundby C."/>
            <person name="Olsen J.V."/>
        </authorList>
    </citation>
    <scope>PHOSPHORYLATION [LARGE SCALE ANALYSIS] AT SER-662 AND SER-767</scope>
    <scope>IDENTIFICATION BY MASS SPECTROMETRY [LARGE SCALE ANALYSIS]</scope>
</reference>
<sequence length="772" mass="86692">MAPGGGGGRRDGWPARGRLLLAALLLLLWTRAASGQSSPQQSVILGMRLASCNKSCGMNPDGIIFVSEGSTVNLRLYGHRLGEISSNLISFTEVDDAETVHNSTNCLELTKDLVVQRLVNVSRGNTSGMLVVITKFLRRSENMKLYALCTRTRADGPWLKWTDKDSLLFMVEEHGRFLPLWLHILLVLVLLVLSGIFSGLNLGLMALDPMELRIVQNCGTEKERRYARKIEPIRRKGNYLLCSLLLGNVLVNTSLTILLDNLIGSGIMAVASSTIGIVIFGEILPQALCSRHGLAVGANTIVLTKIFMLLTFPLSFPISKLLDFVLGQEIRTVYNREKLMEMLKVTEPYNDLVKEELNMIQGALELRTKTVEDIMTQLHDCFMIRSDAILDFNTMSEIMESGYTRIPVFEDEQSNIVDILYVKDLAFVDPDDCTPLKTITRFYNHPVHFVFHDTKLDAMLEEFKKGKSHLAIVQKVNNEGEGDPFYEVLGLVTLEDVIEEIIKSEILDESDTYTDNRTRKRVSMKNKRDFSAFKDADNELKVKISPQLLLAAHRFLATEVPQFSPSLMSEKILLRLLKYPDVIQELRFDEHNKHCTRHYLYTRNKPADCFILILQGKVEVEAGKENMKFETGAFSYYGTMALSLAPPDRSPAHPTPLSRSASLSYPDRNTDMTPSSLAGSNQFGSCILGQYVSDFSVRALTDLQYIKVTRQQYQNGLLASRMDNSPQLTLDGCATCTENLSERPELPVVDETTTLLNERNLLLHRASQEGTI</sequence>
<evidence type="ECO:0000250" key="1"/>
<evidence type="ECO:0000250" key="2">
    <source>
        <dbReference type="UniProtKB" id="Q6P4Q7"/>
    </source>
</evidence>
<evidence type="ECO:0000255" key="3"/>
<evidence type="ECO:0000255" key="4">
    <source>
        <dbReference type="PROSITE-ProRule" id="PRU00703"/>
    </source>
</evidence>
<evidence type="ECO:0000255" key="5">
    <source>
        <dbReference type="PROSITE-ProRule" id="PRU01193"/>
    </source>
</evidence>
<evidence type="ECO:0000256" key="6">
    <source>
        <dbReference type="SAM" id="MobiDB-lite"/>
    </source>
</evidence>
<evidence type="ECO:0000269" key="7">
    <source>
    </source>
</evidence>
<evidence type="ECO:0000269" key="8">
    <source>
    </source>
</evidence>
<evidence type="ECO:0000305" key="9"/>
<evidence type="ECO:0000305" key="10">
    <source>
    </source>
</evidence>
<evidence type="ECO:0007744" key="11">
    <source>
    </source>
</evidence>
<organism>
    <name type="scientific">Rattus norvegicus</name>
    <name type="common">Rat</name>
    <dbReference type="NCBI Taxonomy" id="10116"/>
    <lineage>
        <taxon>Eukaryota</taxon>
        <taxon>Metazoa</taxon>
        <taxon>Chordata</taxon>
        <taxon>Craniata</taxon>
        <taxon>Vertebrata</taxon>
        <taxon>Euteleostomi</taxon>
        <taxon>Mammalia</taxon>
        <taxon>Eutheria</taxon>
        <taxon>Euarchontoglires</taxon>
        <taxon>Glires</taxon>
        <taxon>Rodentia</taxon>
        <taxon>Myomorpha</taxon>
        <taxon>Muroidea</taxon>
        <taxon>Muridae</taxon>
        <taxon>Murinae</taxon>
        <taxon>Rattus</taxon>
    </lineage>
</organism>
<accession>P0C588</accession>
<gene>
    <name type="primary">Cnnm4</name>
    <name type="synonym">Acdp4</name>
</gene>
<feature type="chain" id="PRO_0000295767" description="Metal transporter CNNM4">
    <location>
        <begin position="1"/>
        <end position="772"/>
    </location>
</feature>
<feature type="topological domain" description="Extracellular" evidence="3">
    <location>
        <begin position="1"/>
        <end position="175"/>
    </location>
</feature>
<feature type="transmembrane region" description="Helical" evidence="3">
    <location>
        <begin position="176"/>
        <end position="196"/>
    </location>
</feature>
<feature type="topological domain" description="Cytoplasmic" evidence="3">
    <location>
        <begin position="197"/>
        <end position="237"/>
    </location>
</feature>
<feature type="intramembrane region" description="Helical" evidence="3">
    <location>
        <begin position="238"/>
        <end position="258"/>
    </location>
</feature>
<feature type="topological domain" description="Cytoplasmic" evidence="3">
    <location>
        <begin position="259"/>
        <end position="261"/>
    </location>
</feature>
<feature type="transmembrane region" description="Helical" evidence="3">
    <location>
        <begin position="262"/>
        <end position="282"/>
    </location>
</feature>
<feature type="topological domain" description="Extracellular" evidence="3">
    <location>
        <begin position="283"/>
        <end position="290"/>
    </location>
</feature>
<feature type="transmembrane region" description="Helical" evidence="3">
    <location>
        <begin position="291"/>
        <end position="313"/>
    </location>
</feature>
<feature type="topological domain" description="Cytoplasmic" evidence="3">
    <location>
        <begin position="314"/>
        <end position="772"/>
    </location>
</feature>
<feature type="domain" description="CNNM transmembrane" evidence="5">
    <location>
        <begin position="176"/>
        <end position="356"/>
    </location>
</feature>
<feature type="domain" description="CBS 1" evidence="4">
    <location>
        <begin position="375"/>
        <end position="436"/>
    </location>
</feature>
<feature type="domain" description="CBS 2" evidence="4">
    <location>
        <begin position="443"/>
        <end position="509"/>
    </location>
</feature>
<feature type="region of interest" description="Disordered" evidence="6">
    <location>
        <begin position="647"/>
        <end position="676"/>
    </location>
</feature>
<feature type="modified residue" description="Phosphoserine" evidence="2">
    <location>
        <position position="658"/>
    </location>
</feature>
<feature type="modified residue" description="Phosphoserine" evidence="11">
    <location>
        <position position="662"/>
    </location>
</feature>
<feature type="modified residue" description="Phosphoserine" evidence="11">
    <location>
        <position position="767"/>
    </location>
</feature>
<feature type="glycosylation site" description="N-linked (GlcNAc...) asparagine" evidence="3">
    <location>
        <position position="120"/>
    </location>
</feature>
<keyword id="KW-0091">Biomineralization</keyword>
<keyword id="KW-0129">CBS domain</keyword>
<keyword id="KW-1003">Cell membrane</keyword>
<keyword id="KW-0325">Glycoprotein</keyword>
<keyword id="KW-0406">Ion transport</keyword>
<keyword id="KW-0472">Membrane</keyword>
<keyword id="KW-0597">Phosphoprotein</keyword>
<keyword id="KW-1185">Reference proteome</keyword>
<keyword id="KW-0677">Repeat</keyword>
<keyword id="KW-0716">Sensory transduction</keyword>
<keyword id="KW-0812">Transmembrane</keyword>
<keyword id="KW-1133">Transmembrane helix</keyword>
<keyword id="KW-0813">Transport</keyword>
<keyword id="KW-0844">Vision</keyword>